<sequence>MPQDVLLGKSLPELTDWIETTGQPAYRGKQLYNWLYQKGIHDLSEITVFPKAWREQMGTYPVGRSQIHHQRTAPDGTRKYLLQLHDGLIIETVGIPTEKRLTVCVSSQVGCAMACDFCATGKSGFTRHLQAHEIIDQVLTVQTDFQQRVSHVVFMGMGEPLANLEQVLKSIQSLNQDIGIGQRSLTVSTVGVPDQIRALAQQNLQITLAVSLHAPNQALRESIIPTAVHYPIEALLDECREYVAITRRRLSFEYILLAGVNDLPDHAAELAKKLKGFQSHVNLIPYNPITEVPFQRPGKKRINVFKQILQDHKIAVSVRYSKGLEADAACGQLRSNLRRSAPATVK</sequence>
<name>RLMN_PICP2</name>
<comment type="function">
    <text evidence="1">Specifically methylates position 2 of adenine 2503 in 23S rRNA and position 2 of adenine 37 in tRNAs.</text>
</comment>
<comment type="catalytic activity">
    <reaction evidence="1">
        <text>adenosine(2503) in 23S rRNA + 2 reduced [2Fe-2S]-[ferredoxin] + 2 S-adenosyl-L-methionine = 2-methyladenosine(2503) in 23S rRNA + 5'-deoxyadenosine + L-methionine + 2 oxidized [2Fe-2S]-[ferredoxin] + S-adenosyl-L-homocysteine</text>
        <dbReference type="Rhea" id="RHEA:42916"/>
        <dbReference type="Rhea" id="RHEA-COMP:10000"/>
        <dbReference type="Rhea" id="RHEA-COMP:10001"/>
        <dbReference type="Rhea" id="RHEA-COMP:10152"/>
        <dbReference type="Rhea" id="RHEA-COMP:10282"/>
        <dbReference type="ChEBI" id="CHEBI:17319"/>
        <dbReference type="ChEBI" id="CHEBI:33737"/>
        <dbReference type="ChEBI" id="CHEBI:33738"/>
        <dbReference type="ChEBI" id="CHEBI:57844"/>
        <dbReference type="ChEBI" id="CHEBI:57856"/>
        <dbReference type="ChEBI" id="CHEBI:59789"/>
        <dbReference type="ChEBI" id="CHEBI:74411"/>
        <dbReference type="ChEBI" id="CHEBI:74497"/>
        <dbReference type="EC" id="2.1.1.192"/>
    </reaction>
</comment>
<comment type="catalytic activity">
    <reaction evidence="1">
        <text>adenosine(37) in tRNA + 2 reduced [2Fe-2S]-[ferredoxin] + 2 S-adenosyl-L-methionine = 2-methyladenosine(37) in tRNA + 5'-deoxyadenosine + L-methionine + 2 oxidized [2Fe-2S]-[ferredoxin] + S-adenosyl-L-homocysteine</text>
        <dbReference type="Rhea" id="RHEA:43332"/>
        <dbReference type="Rhea" id="RHEA-COMP:10000"/>
        <dbReference type="Rhea" id="RHEA-COMP:10001"/>
        <dbReference type="Rhea" id="RHEA-COMP:10162"/>
        <dbReference type="Rhea" id="RHEA-COMP:10485"/>
        <dbReference type="ChEBI" id="CHEBI:17319"/>
        <dbReference type="ChEBI" id="CHEBI:33737"/>
        <dbReference type="ChEBI" id="CHEBI:33738"/>
        <dbReference type="ChEBI" id="CHEBI:57844"/>
        <dbReference type="ChEBI" id="CHEBI:57856"/>
        <dbReference type="ChEBI" id="CHEBI:59789"/>
        <dbReference type="ChEBI" id="CHEBI:74411"/>
        <dbReference type="ChEBI" id="CHEBI:74497"/>
        <dbReference type="EC" id="2.1.1.192"/>
    </reaction>
</comment>
<comment type="cofactor">
    <cofactor evidence="1">
        <name>[4Fe-4S] cluster</name>
        <dbReference type="ChEBI" id="CHEBI:49883"/>
    </cofactor>
    <text evidence="1">Binds 1 [4Fe-4S] cluster. The cluster is coordinated with 3 cysteines and an exchangeable S-adenosyl-L-methionine.</text>
</comment>
<comment type="subcellular location">
    <subcellularLocation>
        <location evidence="1">Cytoplasm</location>
    </subcellularLocation>
</comment>
<comment type="miscellaneous">
    <text evidence="1">Reaction proceeds by a ping-pong mechanism involving intermediate methylation of a conserved cysteine residue.</text>
</comment>
<comment type="similarity">
    <text evidence="1">Belongs to the radical SAM superfamily. RlmN family.</text>
</comment>
<protein>
    <recommendedName>
        <fullName evidence="1">Probable dual-specificity RNA methyltransferase RlmN</fullName>
        <ecNumber evidence="1">2.1.1.192</ecNumber>
    </recommendedName>
    <alternativeName>
        <fullName evidence="1">23S rRNA (adenine(2503)-C(2))-methyltransferase</fullName>
    </alternativeName>
    <alternativeName>
        <fullName evidence="1">23S rRNA m2A2503 methyltransferase</fullName>
    </alternativeName>
    <alternativeName>
        <fullName evidence="1">Ribosomal RNA large subunit methyltransferase N</fullName>
    </alternativeName>
    <alternativeName>
        <fullName evidence="1">tRNA (adenine(37)-C(2))-methyltransferase</fullName>
    </alternativeName>
    <alternativeName>
        <fullName evidence="1">tRNA m2A37 methyltransferase</fullName>
    </alternativeName>
</protein>
<reference key="1">
    <citation type="submission" date="2008-02" db="EMBL/GenBank/DDBJ databases">
        <title>Complete sequence of Synechococcus sp. PCC 7002.</title>
        <authorList>
            <person name="Li T."/>
            <person name="Zhao J."/>
            <person name="Zhao C."/>
            <person name="Liu Z."/>
            <person name="Zhao F."/>
            <person name="Marquardt J."/>
            <person name="Nomura C.T."/>
            <person name="Persson S."/>
            <person name="Detter J.C."/>
            <person name="Richardson P.M."/>
            <person name="Lanz C."/>
            <person name="Schuster S.C."/>
            <person name="Wang J."/>
            <person name="Li S."/>
            <person name="Huang X."/>
            <person name="Cai T."/>
            <person name="Yu Z."/>
            <person name="Luo J."/>
            <person name="Zhao J."/>
            <person name="Bryant D.A."/>
        </authorList>
    </citation>
    <scope>NUCLEOTIDE SEQUENCE [LARGE SCALE GENOMIC DNA]</scope>
    <source>
        <strain>ATCC 27264 / PCC 7002 / PR-6</strain>
    </source>
</reference>
<dbReference type="EC" id="2.1.1.192" evidence="1"/>
<dbReference type="EMBL" id="CP000951">
    <property type="protein sequence ID" value="ACA98720.1"/>
    <property type="molecule type" value="Genomic_DNA"/>
</dbReference>
<dbReference type="RefSeq" id="WP_012306344.1">
    <property type="nucleotide sequence ID" value="NZ_JAHHPU010000001.1"/>
</dbReference>
<dbReference type="SMR" id="B1XQH8"/>
<dbReference type="STRING" id="32049.SYNPCC7002_A0715"/>
<dbReference type="KEGG" id="syp:SYNPCC7002_A0715"/>
<dbReference type="eggNOG" id="COG0820">
    <property type="taxonomic scope" value="Bacteria"/>
</dbReference>
<dbReference type="HOGENOM" id="CLU_029101_0_1_3"/>
<dbReference type="Proteomes" id="UP000001688">
    <property type="component" value="Chromosome"/>
</dbReference>
<dbReference type="GO" id="GO:0005737">
    <property type="term" value="C:cytoplasm"/>
    <property type="evidence" value="ECO:0007669"/>
    <property type="project" value="UniProtKB-SubCell"/>
</dbReference>
<dbReference type="GO" id="GO:0051539">
    <property type="term" value="F:4 iron, 4 sulfur cluster binding"/>
    <property type="evidence" value="ECO:0007669"/>
    <property type="project" value="UniProtKB-UniRule"/>
</dbReference>
<dbReference type="GO" id="GO:0046872">
    <property type="term" value="F:metal ion binding"/>
    <property type="evidence" value="ECO:0007669"/>
    <property type="project" value="UniProtKB-KW"/>
</dbReference>
<dbReference type="GO" id="GO:0070040">
    <property type="term" value="F:rRNA (adenine(2503)-C2-)-methyltransferase activity"/>
    <property type="evidence" value="ECO:0007669"/>
    <property type="project" value="UniProtKB-UniRule"/>
</dbReference>
<dbReference type="GO" id="GO:0019843">
    <property type="term" value="F:rRNA binding"/>
    <property type="evidence" value="ECO:0007669"/>
    <property type="project" value="UniProtKB-UniRule"/>
</dbReference>
<dbReference type="GO" id="GO:0002935">
    <property type="term" value="F:tRNA (adenine(37)-C2)-methyltransferase activity"/>
    <property type="evidence" value="ECO:0007669"/>
    <property type="project" value="UniProtKB-UniRule"/>
</dbReference>
<dbReference type="GO" id="GO:0000049">
    <property type="term" value="F:tRNA binding"/>
    <property type="evidence" value="ECO:0007669"/>
    <property type="project" value="UniProtKB-UniRule"/>
</dbReference>
<dbReference type="GO" id="GO:0070475">
    <property type="term" value="P:rRNA base methylation"/>
    <property type="evidence" value="ECO:0007669"/>
    <property type="project" value="UniProtKB-UniRule"/>
</dbReference>
<dbReference type="GO" id="GO:0030488">
    <property type="term" value="P:tRNA methylation"/>
    <property type="evidence" value="ECO:0007669"/>
    <property type="project" value="UniProtKB-UniRule"/>
</dbReference>
<dbReference type="CDD" id="cd01335">
    <property type="entry name" value="Radical_SAM"/>
    <property type="match status" value="1"/>
</dbReference>
<dbReference type="FunFam" id="3.20.20.70:FF:000014">
    <property type="entry name" value="Probable dual-specificity RNA methyltransferase RlmN"/>
    <property type="match status" value="1"/>
</dbReference>
<dbReference type="Gene3D" id="1.10.150.530">
    <property type="match status" value="1"/>
</dbReference>
<dbReference type="Gene3D" id="3.20.20.70">
    <property type="entry name" value="Aldolase class I"/>
    <property type="match status" value="1"/>
</dbReference>
<dbReference type="HAMAP" id="MF_01849">
    <property type="entry name" value="RNA_methyltr_RlmN"/>
    <property type="match status" value="1"/>
</dbReference>
<dbReference type="InterPro" id="IPR013785">
    <property type="entry name" value="Aldolase_TIM"/>
</dbReference>
<dbReference type="InterPro" id="IPR040072">
    <property type="entry name" value="Methyltransferase_A"/>
</dbReference>
<dbReference type="InterPro" id="IPR048641">
    <property type="entry name" value="RlmN_N"/>
</dbReference>
<dbReference type="InterPro" id="IPR027492">
    <property type="entry name" value="RNA_MTrfase_RlmN"/>
</dbReference>
<dbReference type="InterPro" id="IPR004383">
    <property type="entry name" value="rRNA_lsu_MTrfase_RlmN/Cfr"/>
</dbReference>
<dbReference type="InterPro" id="IPR007197">
    <property type="entry name" value="rSAM"/>
</dbReference>
<dbReference type="NCBIfam" id="TIGR00048">
    <property type="entry name" value="rRNA_mod_RlmN"/>
    <property type="match status" value="1"/>
</dbReference>
<dbReference type="PANTHER" id="PTHR30544">
    <property type="entry name" value="23S RRNA METHYLTRANSFERASE"/>
    <property type="match status" value="1"/>
</dbReference>
<dbReference type="PANTHER" id="PTHR30544:SF5">
    <property type="entry name" value="RADICAL SAM CORE DOMAIN-CONTAINING PROTEIN"/>
    <property type="match status" value="1"/>
</dbReference>
<dbReference type="Pfam" id="PF04055">
    <property type="entry name" value="Radical_SAM"/>
    <property type="match status" value="1"/>
</dbReference>
<dbReference type="Pfam" id="PF21016">
    <property type="entry name" value="RlmN_N"/>
    <property type="match status" value="1"/>
</dbReference>
<dbReference type="PIRSF" id="PIRSF006004">
    <property type="entry name" value="CHP00048"/>
    <property type="match status" value="1"/>
</dbReference>
<dbReference type="SFLD" id="SFLDF00275">
    <property type="entry name" value="adenosine_C2_methyltransferase"/>
    <property type="match status" value="1"/>
</dbReference>
<dbReference type="SFLD" id="SFLDG01062">
    <property type="entry name" value="methyltransferase_(Class_A)"/>
    <property type="match status" value="1"/>
</dbReference>
<dbReference type="SUPFAM" id="SSF102114">
    <property type="entry name" value="Radical SAM enzymes"/>
    <property type="match status" value="1"/>
</dbReference>
<dbReference type="PROSITE" id="PS51918">
    <property type="entry name" value="RADICAL_SAM"/>
    <property type="match status" value="1"/>
</dbReference>
<accession>B1XQH8</accession>
<proteinExistence type="inferred from homology"/>
<feature type="chain" id="PRO_0000350482" description="Probable dual-specificity RNA methyltransferase RlmN">
    <location>
        <begin position="1"/>
        <end position="346"/>
    </location>
</feature>
<feature type="domain" description="Radical SAM core" evidence="2">
    <location>
        <begin position="97"/>
        <end position="325"/>
    </location>
</feature>
<feature type="active site" description="Proton acceptor" evidence="1">
    <location>
        <position position="91"/>
    </location>
</feature>
<feature type="active site" description="S-methylcysteine intermediate" evidence="1">
    <location>
        <position position="330"/>
    </location>
</feature>
<feature type="binding site" evidence="1">
    <location>
        <position position="111"/>
    </location>
    <ligand>
        <name>[4Fe-4S] cluster</name>
        <dbReference type="ChEBI" id="CHEBI:49883"/>
        <note>4Fe-4S-S-AdoMet</note>
    </ligand>
</feature>
<feature type="binding site" evidence="1">
    <location>
        <position position="115"/>
    </location>
    <ligand>
        <name>[4Fe-4S] cluster</name>
        <dbReference type="ChEBI" id="CHEBI:49883"/>
        <note>4Fe-4S-S-AdoMet</note>
    </ligand>
</feature>
<feature type="binding site" evidence="1">
    <location>
        <position position="118"/>
    </location>
    <ligand>
        <name>[4Fe-4S] cluster</name>
        <dbReference type="ChEBI" id="CHEBI:49883"/>
        <note>4Fe-4S-S-AdoMet</note>
    </ligand>
</feature>
<feature type="binding site" evidence="1">
    <location>
        <begin position="158"/>
        <end position="159"/>
    </location>
    <ligand>
        <name>S-adenosyl-L-methionine</name>
        <dbReference type="ChEBI" id="CHEBI:59789"/>
    </ligand>
</feature>
<feature type="binding site" evidence="1">
    <location>
        <position position="188"/>
    </location>
    <ligand>
        <name>S-adenosyl-L-methionine</name>
        <dbReference type="ChEBI" id="CHEBI:59789"/>
    </ligand>
</feature>
<feature type="binding site" evidence="1">
    <location>
        <begin position="211"/>
        <end position="213"/>
    </location>
    <ligand>
        <name>S-adenosyl-L-methionine</name>
        <dbReference type="ChEBI" id="CHEBI:59789"/>
    </ligand>
</feature>
<feature type="binding site" evidence="1">
    <location>
        <position position="287"/>
    </location>
    <ligand>
        <name>S-adenosyl-L-methionine</name>
        <dbReference type="ChEBI" id="CHEBI:59789"/>
    </ligand>
</feature>
<feature type="disulfide bond" description="(transient)" evidence="1">
    <location>
        <begin position="104"/>
        <end position="330"/>
    </location>
</feature>
<organism>
    <name type="scientific">Picosynechococcus sp. (strain ATCC 27264 / PCC 7002 / PR-6)</name>
    <name type="common">Agmenellum quadruplicatum</name>
    <dbReference type="NCBI Taxonomy" id="32049"/>
    <lineage>
        <taxon>Bacteria</taxon>
        <taxon>Bacillati</taxon>
        <taxon>Cyanobacteriota</taxon>
        <taxon>Cyanophyceae</taxon>
        <taxon>Oscillatoriophycideae</taxon>
        <taxon>Chroococcales</taxon>
        <taxon>Geminocystaceae</taxon>
        <taxon>Picosynechococcus</taxon>
    </lineage>
</organism>
<evidence type="ECO:0000255" key="1">
    <source>
        <dbReference type="HAMAP-Rule" id="MF_01849"/>
    </source>
</evidence>
<evidence type="ECO:0000255" key="2">
    <source>
        <dbReference type="PROSITE-ProRule" id="PRU01266"/>
    </source>
</evidence>
<keyword id="KW-0004">4Fe-4S</keyword>
<keyword id="KW-0963">Cytoplasm</keyword>
<keyword id="KW-1015">Disulfide bond</keyword>
<keyword id="KW-0408">Iron</keyword>
<keyword id="KW-0411">Iron-sulfur</keyword>
<keyword id="KW-0479">Metal-binding</keyword>
<keyword id="KW-0489">Methyltransferase</keyword>
<keyword id="KW-1185">Reference proteome</keyword>
<keyword id="KW-0698">rRNA processing</keyword>
<keyword id="KW-0949">S-adenosyl-L-methionine</keyword>
<keyword id="KW-0808">Transferase</keyword>
<keyword id="KW-0819">tRNA processing</keyword>
<gene>
    <name evidence="1" type="primary">rlmN</name>
    <name type="ordered locus">SYNPCC7002_A0715</name>
</gene>